<evidence type="ECO:0000255" key="1">
    <source>
        <dbReference type="HAMAP-Rule" id="MF_00031"/>
    </source>
</evidence>
<gene>
    <name evidence="1" type="primary">ruvA</name>
    <name type="ordered locus">MRA_2622</name>
</gene>
<sequence>MIASVRGEVLEVALDHVVIEAAGVGYRVNATPATLATLRQGTEARLITAMIVREDSMTLYGFPDGETRDLFLTLLSVSGVGPRLAMAALAVHDAPALRQVLADGNVAALTRVPGIGKRGAERMVLELRDKVGVAATGGALSTNGHAVRSPVVEALVGLGFAAKQAEEATDTVLAANHDATTSSALRSALSLLGKAR</sequence>
<reference key="1">
    <citation type="journal article" date="2008" name="PLoS ONE">
        <title>Genetic basis of virulence attenuation revealed by comparative genomic analysis of Mycobacterium tuberculosis strain H37Ra versus H37Rv.</title>
        <authorList>
            <person name="Zheng H."/>
            <person name="Lu L."/>
            <person name="Wang B."/>
            <person name="Pu S."/>
            <person name="Zhang X."/>
            <person name="Zhu G."/>
            <person name="Shi W."/>
            <person name="Zhang L."/>
            <person name="Wang H."/>
            <person name="Wang S."/>
            <person name="Zhao G."/>
            <person name="Zhang Y."/>
        </authorList>
    </citation>
    <scope>NUCLEOTIDE SEQUENCE [LARGE SCALE GENOMIC DNA]</scope>
    <source>
        <strain>ATCC 25177 / H37Ra</strain>
    </source>
</reference>
<keyword id="KW-0963">Cytoplasm</keyword>
<keyword id="KW-0227">DNA damage</keyword>
<keyword id="KW-0233">DNA recombination</keyword>
<keyword id="KW-0234">DNA repair</keyword>
<keyword id="KW-0238">DNA-binding</keyword>
<keyword id="KW-1185">Reference proteome</keyword>
<protein>
    <recommendedName>
        <fullName evidence="1">Holliday junction branch migration complex subunit RuvA</fullName>
    </recommendedName>
</protein>
<organism>
    <name type="scientific">Mycobacterium tuberculosis (strain ATCC 25177 / H37Ra)</name>
    <dbReference type="NCBI Taxonomy" id="419947"/>
    <lineage>
        <taxon>Bacteria</taxon>
        <taxon>Bacillati</taxon>
        <taxon>Actinomycetota</taxon>
        <taxon>Actinomycetes</taxon>
        <taxon>Mycobacteriales</taxon>
        <taxon>Mycobacteriaceae</taxon>
        <taxon>Mycobacterium</taxon>
        <taxon>Mycobacterium tuberculosis complex</taxon>
    </lineage>
</organism>
<accession>A5U5U3</accession>
<dbReference type="EMBL" id="CP000611">
    <property type="protein sequence ID" value="ABQ74393.1"/>
    <property type="molecule type" value="Genomic_DNA"/>
</dbReference>
<dbReference type="RefSeq" id="WP_003413421.1">
    <property type="nucleotide sequence ID" value="NZ_CP016972.1"/>
</dbReference>
<dbReference type="SMR" id="A5U5U3"/>
<dbReference type="GeneID" id="45426595"/>
<dbReference type="KEGG" id="mra:MRA_2622"/>
<dbReference type="eggNOG" id="COG0632">
    <property type="taxonomic scope" value="Bacteria"/>
</dbReference>
<dbReference type="HOGENOM" id="CLU_087936_2_1_11"/>
<dbReference type="Proteomes" id="UP000001988">
    <property type="component" value="Chromosome"/>
</dbReference>
<dbReference type="GO" id="GO:0005737">
    <property type="term" value="C:cytoplasm"/>
    <property type="evidence" value="ECO:0007669"/>
    <property type="project" value="UniProtKB-SubCell"/>
</dbReference>
<dbReference type="GO" id="GO:0009379">
    <property type="term" value="C:Holliday junction helicase complex"/>
    <property type="evidence" value="ECO:0007669"/>
    <property type="project" value="InterPro"/>
</dbReference>
<dbReference type="GO" id="GO:0048476">
    <property type="term" value="C:Holliday junction resolvase complex"/>
    <property type="evidence" value="ECO:0007669"/>
    <property type="project" value="UniProtKB-UniRule"/>
</dbReference>
<dbReference type="GO" id="GO:0005524">
    <property type="term" value="F:ATP binding"/>
    <property type="evidence" value="ECO:0007669"/>
    <property type="project" value="InterPro"/>
</dbReference>
<dbReference type="GO" id="GO:0000400">
    <property type="term" value="F:four-way junction DNA binding"/>
    <property type="evidence" value="ECO:0007669"/>
    <property type="project" value="UniProtKB-UniRule"/>
</dbReference>
<dbReference type="GO" id="GO:0009378">
    <property type="term" value="F:four-way junction helicase activity"/>
    <property type="evidence" value="ECO:0007669"/>
    <property type="project" value="InterPro"/>
</dbReference>
<dbReference type="GO" id="GO:0006310">
    <property type="term" value="P:DNA recombination"/>
    <property type="evidence" value="ECO:0007669"/>
    <property type="project" value="UniProtKB-UniRule"/>
</dbReference>
<dbReference type="GO" id="GO:0006281">
    <property type="term" value="P:DNA repair"/>
    <property type="evidence" value="ECO:0007669"/>
    <property type="project" value="UniProtKB-UniRule"/>
</dbReference>
<dbReference type="CDD" id="cd14332">
    <property type="entry name" value="UBA_RuvA_C"/>
    <property type="match status" value="1"/>
</dbReference>
<dbReference type="FunFam" id="1.10.150.20:FF:000093">
    <property type="entry name" value="Holliday junction ATP-dependent DNA helicase RuvA"/>
    <property type="match status" value="1"/>
</dbReference>
<dbReference type="FunFam" id="2.40.50.140:FF:000083">
    <property type="entry name" value="Holliday junction ATP-dependent DNA helicase RuvA"/>
    <property type="match status" value="1"/>
</dbReference>
<dbReference type="Gene3D" id="1.10.150.20">
    <property type="entry name" value="5' to 3' exonuclease, C-terminal subdomain"/>
    <property type="match status" value="1"/>
</dbReference>
<dbReference type="Gene3D" id="1.10.8.10">
    <property type="entry name" value="DNA helicase RuvA subunit, C-terminal domain"/>
    <property type="match status" value="1"/>
</dbReference>
<dbReference type="Gene3D" id="2.40.50.140">
    <property type="entry name" value="Nucleic acid-binding proteins"/>
    <property type="match status" value="1"/>
</dbReference>
<dbReference type="HAMAP" id="MF_00031">
    <property type="entry name" value="DNA_HJ_migration_RuvA"/>
    <property type="match status" value="1"/>
</dbReference>
<dbReference type="InterPro" id="IPR013849">
    <property type="entry name" value="DNA_helicase_Holl-junc_RuvA_I"/>
</dbReference>
<dbReference type="InterPro" id="IPR003583">
    <property type="entry name" value="Hlx-hairpin-Hlx_DNA-bd_motif"/>
</dbReference>
<dbReference type="InterPro" id="IPR012340">
    <property type="entry name" value="NA-bd_OB-fold"/>
</dbReference>
<dbReference type="InterPro" id="IPR000085">
    <property type="entry name" value="RuvA"/>
</dbReference>
<dbReference type="InterPro" id="IPR010994">
    <property type="entry name" value="RuvA_2-like"/>
</dbReference>
<dbReference type="InterPro" id="IPR011114">
    <property type="entry name" value="RuvA_C"/>
</dbReference>
<dbReference type="InterPro" id="IPR036267">
    <property type="entry name" value="RuvA_C_sf"/>
</dbReference>
<dbReference type="NCBIfam" id="TIGR00084">
    <property type="entry name" value="ruvA"/>
    <property type="match status" value="1"/>
</dbReference>
<dbReference type="Pfam" id="PF14520">
    <property type="entry name" value="HHH_5"/>
    <property type="match status" value="1"/>
</dbReference>
<dbReference type="Pfam" id="PF07499">
    <property type="entry name" value="RuvA_C"/>
    <property type="match status" value="1"/>
</dbReference>
<dbReference type="Pfam" id="PF01330">
    <property type="entry name" value="RuvA_N"/>
    <property type="match status" value="1"/>
</dbReference>
<dbReference type="SMART" id="SM00278">
    <property type="entry name" value="HhH1"/>
    <property type="match status" value="2"/>
</dbReference>
<dbReference type="SUPFAM" id="SSF46929">
    <property type="entry name" value="DNA helicase RuvA subunit, C-terminal domain"/>
    <property type="match status" value="1"/>
</dbReference>
<dbReference type="SUPFAM" id="SSF50249">
    <property type="entry name" value="Nucleic acid-binding proteins"/>
    <property type="match status" value="1"/>
</dbReference>
<dbReference type="SUPFAM" id="SSF47781">
    <property type="entry name" value="RuvA domain 2-like"/>
    <property type="match status" value="1"/>
</dbReference>
<feature type="chain" id="PRO_1000002493" description="Holliday junction branch migration complex subunit RuvA">
    <location>
        <begin position="1"/>
        <end position="196"/>
    </location>
</feature>
<feature type="region of interest" description="Domain I" evidence="1">
    <location>
        <begin position="1"/>
        <end position="63"/>
    </location>
</feature>
<feature type="region of interest" description="Domain II" evidence="1">
    <location>
        <begin position="64"/>
        <end position="138"/>
    </location>
</feature>
<feature type="region of interest" description="Flexible linker" evidence="1">
    <location>
        <begin position="138"/>
        <end position="142"/>
    </location>
</feature>
<feature type="region of interest" description="Domain III" evidence="1">
    <location>
        <begin position="143"/>
        <end position="196"/>
    </location>
</feature>
<name>RUVA_MYCTA</name>
<comment type="function">
    <text evidence="1">The RuvA-RuvB-RuvC complex processes Holliday junction (HJ) DNA during genetic recombination and DNA repair, while the RuvA-RuvB complex plays an important role in the rescue of blocked DNA replication forks via replication fork reversal (RFR). RuvA specifically binds to HJ cruciform DNA, conferring on it an open structure. The RuvB hexamer acts as an ATP-dependent pump, pulling dsDNA into and through the RuvAB complex. HJ branch migration allows RuvC to scan DNA until it finds its consensus sequence, where it cleaves and resolves the cruciform DNA.</text>
</comment>
<comment type="subunit">
    <text evidence="1">Homotetramer. Forms an RuvA(8)-RuvB(12)-Holliday junction (HJ) complex. HJ DNA is sandwiched between 2 RuvA tetramers; dsDNA enters through RuvA and exits via RuvB. An RuvB hexamer assembles on each DNA strand where it exits the tetramer. Each RuvB hexamer is contacted by two RuvA subunits (via domain III) on 2 adjacent RuvB subunits; this complex drives branch migration. In the full resolvosome a probable DNA-RuvA(4)-RuvB(12)-RuvC(2) complex forms which resolves the HJ.</text>
</comment>
<comment type="subcellular location">
    <subcellularLocation>
        <location evidence="1">Cytoplasm</location>
    </subcellularLocation>
</comment>
<comment type="domain">
    <text evidence="1">Has three domains with a flexible linker between the domains II and III and assumes an 'L' shape. Domain III is highly mobile and contacts RuvB.</text>
</comment>
<comment type="similarity">
    <text evidence="1">Belongs to the RuvA family.</text>
</comment>
<proteinExistence type="inferred from homology"/>